<dbReference type="EMBL" id="CP001132">
    <property type="protein sequence ID" value="ACH82775.1"/>
    <property type="molecule type" value="Genomic_DNA"/>
</dbReference>
<dbReference type="RefSeq" id="WP_009568280.1">
    <property type="nucleotide sequence ID" value="NC_011206.1"/>
</dbReference>
<dbReference type="SMR" id="B5EM96"/>
<dbReference type="GeneID" id="65279728"/>
<dbReference type="KEGG" id="afe:Lferr_0521"/>
<dbReference type="eggNOG" id="COG0099">
    <property type="taxonomic scope" value="Bacteria"/>
</dbReference>
<dbReference type="HOGENOM" id="CLU_103849_1_2_6"/>
<dbReference type="GO" id="GO:0005829">
    <property type="term" value="C:cytosol"/>
    <property type="evidence" value="ECO:0007669"/>
    <property type="project" value="TreeGrafter"/>
</dbReference>
<dbReference type="GO" id="GO:0015935">
    <property type="term" value="C:small ribosomal subunit"/>
    <property type="evidence" value="ECO:0007669"/>
    <property type="project" value="TreeGrafter"/>
</dbReference>
<dbReference type="GO" id="GO:0019843">
    <property type="term" value="F:rRNA binding"/>
    <property type="evidence" value="ECO:0007669"/>
    <property type="project" value="UniProtKB-UniRule"/>
</dbReference>
<dbReference type="GO" id="GO:0003735">
    <property type="term" value="F:structural constituent of ribosome"/>
    <property type="evidence" value="ECO:0007669"/>
    <property type="project" value="InterPro"/>
</dbReference>
<dbReference type="GO" id="GO:0000049">
    <property type="term" value="F:tRNA binding"/>
    <property type="evidence" value="ECO:0007669"/>
    <property type="project" value="UniProtKB-UniRule"/>
</dbReference>
<dbReference type="GO" id="GO:0006412">
    <property type="term" value="P:translation"/>
    <property type="evidence" value="ECO:0007669"/>
    <property type="project" value="UniProtKB-UniRule"/>
</dbReference>
<dbReference type="FunFam" id="1.10.8.50:FF:000001">
    <property type="entry name" value="30S ribosomal protein S13"/>
    <property type="match status" value="1"/>
</dbReference>
<dbReference type="FunFam" id="4.10.910.10:FF:000001">
    <property type="entry name" value="30S ribosomal protein S13"/>
    <property type="match status" value="1"/>
</dbReference>
<dbReference type="Gene3D" id="1.10.8.50">
    <property type="match status" value="1"/>
</dbReference>
<dbReference type="Gene3D" id="4.10.910.10">
    <property type="entry name" value="30s ribosomal protein s13, domain 2"/>
    <property type="match status" value="1"/>
</dbReference>
<dbReference type="HAMAP" id="MF_01315">
    <property type="entry name" value="Ribosomal_uS13"/>
    <property type="match status" value="1"/>
</dbReference>
<dbReference type="InterPro" id="IPR027437">
    <property type="entry name" value="Rbsml_uS13_C"/>
</dbReference>
<dbReference type="InterPro" id="IPR001892">
    <property type="entry name" value="Ribosomal_uS13"/>
</dbReference>
<dbReference type="InterPro" id="IPR010979">
    <property type="entry name" value="Ribosomal_uS13-like_H2TH"/>
</dbReference>
<dbReference type="InterPro" id="IPR019980">
    <property type="entry name" value="Ribosomal_uS13_bac-type"/>
</dbReference>
<dbReference type="InterPro" id="IPR018269">
    <property type="entry name" value="Ribosomal_uS13_CS"/>
</dbReference>
<dbReference type="NCBIfam" id="TIGR03631">
    <property type="entry name" value="uS13_bact"/>
    <property type="match status" value="1"/>
</dbReference>
<dbReference type="PANTHER" id="PTHR10871">
    <property type="entry name" value="30S RIBOSOMAL PROTEIN S13/40S RIBOSOMAL PROTEIN S18"/>
    <property type="match status" value="1"/>
</dbReference>
<dbReference type="PANTHER" id="PTHR10871:SF1">
    <property type="entry name" value="SMALL RIBOSOMAL SUBUNIT PROTEIN US13M"/>
    <property type="match status" value="1"/>
</dbReference>
<dbReference type="Pfam" id="PF00416">
    <property type="entry name" value="Ribosomal_S13"/>
    <property type="match status" value="1"/>
</dbReference>
<dbReference type="PIRSF" id="PIRSF002134">
    <property type="entry name" value="Ribosomal_S13"/>
    <property type="match status" value="1"/>
</dbReference>
<dbReference type="SUPFAM" id="SSF46946">
    <property type="entry name" value="S13-like H2TH domain"/>
    <property type="match status" value="1"/>
</dbReference>
<dbReference type="PROSITE" id="PS00646">
    <property type="entry name" value="RIBOSOMAL_S13_1"/>
    <property type="match status" value="1"/>
</dbReference>
<dbReference type="PROSITE" id="PS50159">
    <property type="entry name" value="RIBOSOMAL_S13_2"/>
    <property type="match status" value="1"/>
</dbReference>
<protein>
    <recommendedName>
        <fullName evidence="1">Small ribosomal subunit protein uS13</fullName>
    </recommendedName>
    <alternativeName>
        <fullName evidence="3">30S ribosomal protein S13</fullName>
    </alternativeName>
</protein>
<sequence>MARIAGVNIPNNKQIEIALTYIYGIGRTRARTVLSAADIACDMRVKDISEPELERIRSEVAKFLVEGDLRREVTMNIKRLMDLGCYRGIRHRRGLPVHGQRTKTNARTRKGPAKSITR</sequence>
<evidence type="ECO:0000255" key="1">
    <source>
        <dbReference type="HAMAP-Rule" id="MF_01315"/>
    </source>
</evidence>
<evidence type="ECO:0000256" key="2">
    <source>
        <dbReference type="SAM" id="MobiDB-lite"/>
    </source>
</evidence>
<evidence type="ECO:0000305" key="3"/>
<feature type="chain" id="PRO_1000141209" description="Small ribosomal subunit protein uS13">
    <location>
        <begin position="1"/>
        <end position="118"/>
    </location>
</feature>
<feature type="region of interest" description="Disordered" evidence="2">
    <location>
        <begin position="94"/>
        <end position="118"/>
    </location>
</feature>
<organism>
    <name type="scientific">Acidithiobacillus ferrooxidans (strain ATCC 53993 / BNL-5-31)</name>
    <name type="common">Leptospirillum ferrooxidans (ATCC 53993)</name>
    <dbReference type="NCBI Taxonomy" id="380394"/>
    <lineage>
        <taxon>Bacteria</taxon>
        <taxon>Pseudomonadati</taxon>
        <taxon>Pseudomonadota</taxon>
        <taxon>Acidithiobacillia</taxon>
        <taxon>Acidithiobacillales</taxon>
        <taxon>Acidithiobacillaceae</taxon>
        <taxon>Acidithiobacillus</taxon>
    </lineage>
</organism>
<keyword id="KW-0687">Ribonucleoprotein</keyword>
<keyword id="KW-0689">Ribosomal protein</keyword>
<keyword id="KW-0694">RNA-binding</keyword>
<keyword id="KW-0699">rRNA-binding</keyword>
<keyword id="KW-0820">tRNA-binding</keyword>
<accession>B5EM96</accession>
<reference key="1">
    <citation type="submission" date="2008-08" db="EMBL/GenBank/DDBJ databases">
        <title>Complete sequence of Acidithiobacillus ferrooxidans ATCC 53993.</title>
        <authorList>
            <person name="Lucas S."/>
            <person name="Copeland A."/>
            <person name="Lapidus A."/>
            <person name="Glavina del Rio T."/>
            <person name="Dalin E."/>
            <person name="Tice H."/>
            <person name="Bruce D."/>
            <person name="Goodwin L."/>
            <person name="Pitluck S."/>
            <person name="Sims D."/>
            <person name="Brettin T."/>
            <person name="Detter J.C."/>
            <person name="Han C."/>
            <person name="Kuske C.R."/>
            <person name="Larimer F."/>
            <person name="Land M."/>
            <person name="Hauser L."/>
            <person name="Kyrpides N."/>
            <person name="Lykidis A."/>
            <person name="Borole A.P."/>
        </authorList>
    </citation>
    <scope>NUCLEOTIDE SEQUENCE [LARGE SCALE GENOMIC DNA]</scope>
    <source>
        <strain>ATCC 53993 / BNL-5-31</strain>
    </source>
</reference>
<gene>
    <name evidence="1" type="primary">rpsM</name>
    <name type="ordered locus">Lferr_0521</name>
</gene>
<proteinExistence type="inferred from homology"/>
<comment type="function">
    <text evidence="1">Located at the top of the head of the 30S subunit, it contacts several helices of the 16S rRNA. In the 70S ribosome it contacts the 23S rRNA (bridge B1a) and protein L5 of the 50S subunit (bridge B1b), connecting the 2 subunits; these bridges are implicated in subunit movement. Contacts the tRNAs in the A and P-sites.</text>
</comment>
<comment type="subunit">
    <text evidence="1">Part of the 30S ribosomal subunit. Forms a loose heterodimer with protein S19. Forms two bridges to the 50S subunit in the 70S ribosome.</text>
</comment>
<comment type="similarity">
    <text evidence="1">Belongs to the universal ribosomal protein uS13 family.</text>
</comment>
<name>RS13_ACIF5</name>